<gene>
    <name type="primary">PRM1</name>
</gene>
<comment type="function">
    <text>Protamines substitute for histones in the chromatin of sperm during the haploid phase of spermatogenesis. They compact sperm DNA into a highly condensed, stable and inactive complex.</text>
</comment>
<comment type="subcellular location">
    <subcellularLocation>
        <location>Nucleus</location>
    </subcellularLocation>
    <subcellularLocation>
        <location>Chromosome</location>
    </subcellularLocation>
</comment>
<comment type="tissue specificity">
    <text>Testis.</text>
</comment>
<comment type="similarity">
    <text evidence="2">Belongs to the protamine P1 family.</text>
</comment>
<organism>
    <name type="scientific">Thylacinus cynocephalus</name>
    <name type="common">Tasmanian wolf</name>
    <dbReference type="NCBI Taxonomy" id="9275"/>
    <lineage>
        <taxon>Eukaryota</taxon>
        <taxon>Metazoa</taxon>
        <taxon>Chordata</taxon>
        <taxon>Craniata</taxon>
        <taxon>Vertebrata</taxon>
        <taxon>Euteleostomi</taxon>
        <taxon>Mammalia</taxon>
        <taxon>Metatheria</taxon>
        <taxon>Dasyuromorphia</taxon>
        <taxon>Thylacinidae</taxon>
        <taxon>Thylacinus</taxon>
    </lineage>
</organism>
<keyword id="KW-0158">Chromosome</keyword>
<keyword id="KW-0217">Developmental protein</keyword>
<keyword id="KW-0221">Differentiation</keyword>
<keyword id="KW-0226">DNA condensation</keyword>
<keyword id="KW-0238">DNA-binding</keyword>
<keyword id="KW-0544">Nucleosome core</keyword>
<keyword id="KW-0539">Nucleus</keyword>
<keyword id="KW-0744">Spermatogenesis</keyword>
<proteinExistence type="evidence at transcript level"/>
<dbReference type="EMBL" id="U87140">
    <property type="protein sequence ID" value="AAB91328.1"/>
    <property type="molecule type" value="Genomic_DNA"/>
</dbReference>
<dbReference type="GO" id="GO:0000786">
    <property type="term" value="C:nucleosome"/>
    <property type="evidence" value="ECO:0007669"/>
    <property type="project" value="UniProtKB-KW"/>
</dbReference>
<dbReference type="GO" id="GO:0005634">
    <property type="term" value="C:nucleus"/>
    <property type="evidence" value="ECO:0007669"/>
    <property type="project" value="UniProtKB-SubCell"/>
</dbReference>
<dbReference type="GO" id="GO:0003677">
    <property type="term" value="F:DNA binding"/>
    <property type="evidence" value="ECO:0007669"/>
    <property type="project" value="UniProtKB-KW"/>
</dbReference>
<dbReference type="GO" id="GO:0030261">
    <property type="term" value="P:chromosome condensation"/>
    <property type="evidence" value="ECO:0007669"/>
    <property type="project" value="UniProtKB-KW"/>
</dbReference>
<dbReference type="GO" id="GO:0035092">
    <property type="term" value="P:sperm DNA condensation"/>
    <property type="evidence" value="ECO:0007669"/>
    <property type="project" value="InterPro"/>
</dbReference>
<dbReference type="InterPro" id="IPR000221">
    <property type="entry name" value="Protamine_P1"/>
</dbReference>
<dbReference type="PROSITE" id="PS00048">
    <property type="entry name" value="PROTAMINE_P1"/>
    <property type="match status" value="1"/>
</dbReference>
<reference key="1">
    <citation type="journal article" date="1997" name="Proc. R. Soc. B">
        <title>DNA phylogeny of the marsupial wolf resolved.</title>
        <authorList>
            <person name="Krajewski C."/>
            <person name="Buckley L."/>
            <person name="Westerman M."/>
        </authorList>
    </citation>
    <scope>NUCLEOTIDE SEQUENCE [GENOMIC DNA]</scope>
</reference>
<name>HSP1_THYCY</name>
<accession>P67846</accession>
<accession>P42140</accession>
<accession>P42150</accession>
<accession>P42154</accession>
<protein>
    <recommendedName>
        <fullName>Sperm protamine P1</fullName>
    </recommendedName>
</protein>
<evidence type="ECO:0000256" key="1">
    <source>
        <dbReference type="SAM" id="MobiDB-lite"/>
    </source>
</evidence>
<evidence type="ECO:0000305" key="2"/>
<feature type="chain" id="PRO_0000191577" description="Sperm protamine P1">
    <location>
        <begin position="1"/>
        <end position="63"/>
    </location>
</feature>
<feature type="region of interest" description="Disordered" evidence="1">
    <location>
        <begin position="1"/>
        <end position="63"/>
    </location>
</feature>
<sequence length="63" mass="8697">MARYRRHSRSRSRSRYRRRRRRRSRHHNRRRTYRRSRRHSRRRRGRRRGYSRRRYSRRGRRRY</sequence>